<proteinExistence type="inferred from homology"/>
<dbReference type="EC" id="4.3.2.1" evidence="1"/>
<dbReference type="EMBL" id="CP001022">
    <property type="protein sequence ID" value="ACB59966.1"/>
    <property type="molecule type" value="Genomic_DNA"/>
</dbReference>
<dbReference type="RefSeq" id="WP_012369390.1">
    <property type="nucleotide sequence ID" value="NC_010556.1"/>
</dbReference>
<dbReference type="SMR" id="B1YJ36"/>
<dbReference type="STRING" id="262543.Exig_0484"/>
<dbReference type="KEGG" id="esi:Exig_0484"/>
<dbReference type="eggNOG" id="COG0165">
    <property type="taxonomic scope" value="Bacteria"/>
</dbReference>
<dbReference type="HOGENOM" id="CLU_027272_2_3_9"/>
<dbReference type="OrthoDB" id="9769623at2"/>
<dbReference type="UniPathway" id="UPA00068">
    <property type="reaction ID" value="UER00114"/>
</dbReference>
<dbReference type="Proteomes" id="UP000001681">
    <property type="component" value="Chromosome"/>
</dbReference>
<dbReference type="GO" id="GO:0005829">
    <property type="term" value="C:cytosol"/>
    <property type="evidence" value="ECO:0007669"/>
    <property type="project" value="TreeGrafter"/>
</dbReference>
<dbReference type="GO" id="GO:0004056">
    <property type="term" value="F:argininosuccinate lyase activity"/>
    <property type="evidence" value="ECO:0007669"/>
    <property type="project" value="UniProtKB-UniRule"/>
</dbReference>
<dbReference type="GO" id="GO:0042450">
    <property type="term" value="P:arginine biosynthetic process via ornithine"/>
    <property type="evidence" value="ECO:0007669"/>
    <property type="project" value="InterPro"/>
</dbReference>
<dbReference type="GO" id="GO:0006526">
    <property type="term" value="P:L-arginine biosynthetic process"/>
    <property type="evidence" value="ECO:0007669"/>
    <property type="project" value="UniProtKB-UniRule"/>
</dbReference>
<dbReference type="CDD" id="cd01359">
    <property type="entry name" value="Argininosuccinate_lyase"/>
    <property type="match status" value="1"/>
</dbReference>
<dbReference type="FunFam" id="1.10.275.10:FF:000002">
    <property type="entry name" value="Argininosuccinate lyase"/>
    <property type="match status" value="1"/>
</dbReference>
<dbReference type="FunFam" id="1.10.40.30:FF:000001">
    <property type="entry name" value="Argininosuccinate lyase"/>
    <property type="match status" value="1"/>
</dbReference>
<dbReference type="FunFam" id="1.20.200.10:FF:000002">
    <property type="entry name" value="Argininosuccinate lyase"/>
    <property type="match status" value="1"/>
</dbReference>
<dbReference type="Gene3D" id="1.10.40.30">
    <property type="entry name" value="Fumarase/aspartase (C-terminal domain)"/>
    <property type="match status" value="1"/>
</dbReference>
<dbReference type="Gene3D" id="1.20.200.10">
    <property type="entry name" value="Fumarase/aspartase (Central domain)"/>
    <property type="match status" value="1"/>
</dbReference>
<dbReference type="Gene3D" id="1.10.275.10">
    <property type="entry name" value="Fumarase/aspartase (N-terminal domain)"/>
    <property type="match status" value="1"/>
</dbReference>
<dbReference type="HAMAP" id="MF_00006">
    <property type="entry name" value="Arg_succ_lyase"/>
    <property type="match status" value="1"/>
</dbReference>
<dbReference type="InterPro" id="IPR029419">
    <property type="entry name" value="Arg_succ_lyase_C"/>
</dbReference>
<dbReference type="InterPro" id="IPR009049">
    <property type="entry name" value="Argininosuccinate_lyase"/>
</dbReference>
<dbReference type="InterPro" id="IPR024083">
    <property type="entry name" value="Fumarase/histidase_N"/>
</dbReference>
<dbReference type="InterPro" id="IPR020557">
    <property type="entry name" value="Fumarate_lyase_CS"/>
</dbReference>
<dbReference type="InterPro" id="IPR000362">
    <property type="entry name" value="Fumarate_lyase_fam"/>
</dbReference>
<dbReference type="InterPro" id="IPR022761">
    <property type="entry name" value="Fumarate_lyase_N"/>
</dbReference>
<dbReference type="InterPro" id="IPR008948">
    <property type="entry name" value="L-Aspartase-like"/>
</dbReference>
<dbReference type="NCBIfam" id="TIGR00838">
    <property type="entry name" value="argH"/>
    <property type="match status" value="1"/>
</dbReference>
<dbReference type="PANTHER" id="PTHR43814">
    <property type="entry name" value="ARGININOSUCCINATE LYASE"/>
    <property type="match status" value="1"/>
</dbReference>
<dbReference type="PANTHER" id="PTHR43814:SF1">
    <property type="entry name" value="ARGININOSUCCINATE LYASE"/>
    <property type="match status" value="1"/>
</dbReference>
<dbReference type="Pfam" id="PF14698">
    <property type="entry name" value="ASL_C2"/>
    <property type="match status" value="1"/>
</dbReference>
<dbReference type="Pfam" id="PF00206">
    <property type="entry name" value="Lyase_1"/>
    <property type="match status" value="1"/>
</dbReference>
<dbReference type="PRINTS" id="PR00145">
    <property type="entry name" value="ARGSUCLYASE"/>
</dbReference>
<dbReference type="PRINTS" id="PR00149">
    <property type="entry name" value="FUMRATELYASE"/>
</dbReference>
<dbReference type="SUPFAM" id="SSF48557">
    <property type="entry name" value="L-aspartase-like"/>
    <property type="match status" value="1"/>
</dbReference>
<dbReference type="PROSITE" id="PS00163">
    <property type="entry name" value="FUMARATE_LYASES"/>
    <property type="match status" value="1"/>
</dbReference>
<keyword id="KW-0028">Amino-acid biosynthesis</keyword>
<keyword id="KW-0055">Arginine biosynthesis</keyword>
<keyword id="KW-0963">Cytoplasm</keyword>
<keyword id="KW-0456">Lyase</keyword>
<keyword id="KW-1185">Reference proteome</keyword>
<evidence type="ECO:0000255" key="1">
    <source>
        <dbReference type="HAMAP-Rule" id="MF_00006"/>
    </source>
</evidence>
<gene>
    <name evidence="1" type="primary">argH</name>
    <name type="ordered locus">Exig_0484</name>
</gene>
<feature type="chain" id="PRO_1000116324" description="Argininosuccinate lyase">
    <location>
        <begin position="1"/>
        <end position="457"/>
    </location>
</feature>
<reference key="1">
    <citation type="submission" date="2008-04" db="EMBL/GenBank/DDBJ databases">
        <title>Complete sequence of chromosome of Exiguobacterium sibiricum 255-15.</title>
        <authorList>
            <consortium name="US DOE Joint Genome Institute"/>
            <person name="Copeland A."/>
            <person name="Lucas S."/>
            <person name="Lapidus A."/>
            <person name="Glavina del Rio T."/>
            <person name="Dalin E."/>
            <person name="Tice H."/>
            <person name="Bruce D."/>
            <person name="Goodwin L."/>
            <person name="Pitluck S."/>
            <person name="Kiss H."/>
            <person name="Chertkov O."/>
            <person name="Monk C."/>
            <person name="Brettin T."/>
            <person name="Detter J.C."/>
            <person name="Han C."/>
            <person name="Kuske C.R."/>
            <person name="Schmutz J."/>
            <person name="Larimer F."/>
            <person name="Land M."/>
            <person name="Hauser L."/>
            <person name="Kyrpides N."/>
            <person name="Mikhailova N."/>
            <person name="Vishnivetskaya T."/>
            <person name="Rodrigues D.F."/>
            <person name="Gilichinsky D."/>
            <person name="Tiedje J."/>
            <person name="Richardson P."/>
        </authorList>
    </citation>
    <scope>NUCLEOTIDE SEQUENCE [LARGE SCALE GENOMIC DNA]</scope>
    <source>
        <strain>DSM 17290 / CCUG 55495 / CIP 109462 / JCM 13490 / 255-15</strain>
    </source>
</reference>
<comment type="catalytic activity">
    <reaction evidence="1">
        <text>2-(N(omega)-L-arginino)succinate = fumarate + L-arginine</text>
        <dbReference type="Rhea" id="RHEA:24020"/>
        <dbReference type="ChEBI" id="CHEBI:29806"/>
        <dbReference type="ChEBI" id="CHEBI:32682"/>
        <dbReference type="ChEBI" id="CHEBI:57472"/>
        <dbReference type="EC" id="4.3.2.1"/>
    </reaction>
</comment>
<comment type="pathway">
    <text evidence="1">Amino-acid biosynthesis; L-arginine biosynthesis; L-arginine from L-ornithine and carbamoyl phosphate: step 3/3.</text>
</comment>
<comment type="subcellular location">
    <subcellularLocation>
        <location evidence="1">Cytoplasm</location>
    </subcellularLocation>
</comment>
<comment type="similarity">
    <text evidence="1">Belongs to the lyase 1 family. Argininosuccinate lyase subfamily.</text>
</comment>
<accession>B1YJ36</accession>
<organism>
    <name type="scientific">Exiguobacterium sibiricum (strain DSM 17290 / CCUG 55495 / CIP 109462 / JCM 13490 / 255-15)</name>
    <dbReference type="NCBI Taxonomy" id="262543"/>
    <lineage>
        <taxon>Bacteria</taxon>
        <taxon>Bacillati</taxon>
        <taxon>Bacillota</taxon>
        <taxon>Bacilli</taxon>
        <taxon>Bacillales</taxon>
        <taxon>Bacillales Family XII. Incertae Sedis</taxon>
        <taxon>Exiguobacterium</taxon>
    </lineage>
</organism>
<protein>
    <recommendedName>
        <fullName evidence="1">Argininosuccinate lyase</fullName>
        <shortName evidence="1">ASAL</shortName>
        <ecNumber evidence="1">4.3.2.1</ecNumber>
    </recommendedName>
    <alternativeName>
        <fullName evidence="1">Arginosuccinase</fullName>
    </alternativeName>
</protein>
<sequence length="457" mass="51161">MTKLWGGRFTESASAQAEAFGASISFDQKLAAVDLQGSLAHAQMLYEQGILEKTEWEQIEAGLKQLQTTLEQHVYTTVDEDIHMNLERLLTEQIGPVAGKLHTARSRNDQVATDLHLWMEQHVLELLSSLRNLQSVITEQAEQHVETVMPGYTHLQRAQPISLAHHLLAYFWMFERDADRLTDNLKRIRMSPLGAGALAGTTFPIDRFKSAELLGFEQVYPNSLDAVSDRDFVIEYLGIASTVMMHLSRFCEEIIIWASQEFSFIELSDAFSTGSSMMPQKKNPDFAELIRGKTGRVYGNLMGFLTTMKALPLAYNKDMQEDKEGVFDTADTVLQSVQIFTGMIESATFKTEALKKATMQDFSNATELADYLVTKGIPFREAHEIVGKAVLHCVQSGCFLKDLTLSTYQTFHPVIAEDVYPLLDPVQAVARRGSYGGTGFTAVRDQLALAKKQLEKL</sequence>
<name>ARLY_EXIS2</name>